<keyword id="KW-0150">Chloroplast</keyword>
<keyword id="KW-0472">Membrane</keyword>
<keyword id="KW-0934">Plastid</keyword>
<keyword id="KW-0793">Thylakoid</keyword>
<keyword id="KW-0812">Transmembrane</keyword>
<keyword id="KW-1133">Transmembrane helix</keyword>
<sequence>METATLVTISISCLLVSFTGYAIYTSFGRPSEQLRDPFEDHED</sequence>
<evidence type="ECO:0000255" key="1">
    <source>
        <dbReference type="HAMAP-Rule" id="MF_00293"/>
    </source>
</evidence>
<comment type="function">
    <text evidence="1">May play a role in photosystem I and II biogenesis.</text>
</comment>
<comment type="subcellular location">
    <subcellularLocation>
        <location evidence="1">Plastid</location>
        <location evidence="1">Chloroplast thylakoid membrane</location>
        <topology evidence="1">Single-pass membrane protein</topology>
    </subcellularLocation>
</comment>
<comment type="similarity">
    <text evidence="1">Belongs to the PsbN family.</text>
</comment>
<comment type="caution">
    <text evidence="1">Originally thought to be a component of PSII; based on experiments in Synechocystis, N.tabacum and barley, and its absence from PSII in T.elongatus and T.vulcanus, this is probably not true.</text>
</comment>
<proteinExistence type="inferred from homology"/>
<dbReference type="EMBL" id="AY007472">
    <property type="protein sequence ID" value="AAG12401.1"/>
    <property type="molecule type" value="Genomic_DNA"/>
</dbReference>
<dbReference type="EMBL" id="EU342371">
    <property type="protein sequence ID" value="ABY26817.1"/>
    <property type="molecule type" value="Genomic_DNA"/>
</dbReference>
<dbReference type="EMBL" id="AP009568">
    <property type="protein sequence ID" value="BAH11201.1"/>
    <property type="molecule type" value="Genomic_DNA"/>
</dbReference>
<dbReference type="RefSeq" id="YP_001876604.1">
    <property type="nucleotide sequence ID" value="NC_010654.1"/>
</dbReference>
<dbReference type="SMR" id="Q8HS08"/>
<dbReference type="GeneID" id="6276242"/>
<dbReference type="GO" id="GO:0009535">
    <property type="term" value="C:chloroplast thylakoid membrane"/>
    <property type="evidence" value="ECO:0007669"/>
    <property type="project" value="UniProtKB-SubCell"/>
</dbReference>
<dbReference type="GO" id="GO:0015979">
    <property type="term" value="P:photosynthesis"/>
    <property type="evidence" value="ECO:0007669"/>
    <property type="project" value="InterPro"/>
</dbReference>
<dbReference type="HAMAP" id="MF_00293">
    <property type="entry name" value="PSII_PsbN"/>
    <property type="match status" value="1"/>
</dbReference>
<dbReference type="InterPro" id="IPR003398">
    <property type="entry name" value="PSII_PsbN"/>
</dbReference>
<dbReference type="PANTHER" id="PTHR35326">
    <property type="entry name" value="PROTEIN PSBN"/>
    <property type="match status" value="1"/>
</dbReference>
<dbReference type="PANTHER" id="PTHR35326:SF3">
    <property type="entry name" value="PROTEIN PSBN"/>
    <property type="match status" value="1"/>
</dbReference>
<dbReference type="Pfam" id="PF02468">
    <property type="entry name" value="PsbN"/>
    <property type="match status" value="1"/>
</dbReference>
<organism>
    <name type="scientific">Welwitschia mirabilis</name>
    <name type="common">Tree tumbo</name>
    <name type="synonym">Welwitschia bainesii</name>
    <dbReference type="NCBI Taxonomy" id="3377"/>
    <lineage>
        <taxon>Eukaryota</taxon>
        <taxon>Viridiplantae</taxon>
        <taxon>Streptophyta</taxon>
        <taxon>Embryophyta</taxon>
        <taxon>Tracheophyta</taxon>
        <taxon>Spermatophyta</taxon>
        <taxon>Gnetopsida</taxon>
        <taxon>Gnetidae</taxon>
        <taxon>Welwitschiales</taxon>
        <taxon>Welwitschiaceae</taxon>
        <taxon>Welwitschia</taxon>
    </lineage>
</organism>
<gene>
    <name evidence="1" type="primary">psbN</name>
</gene>
<geneLocation type="chloroplast"/>
<reference key="1">
    <citation type="submission" date="2000-02" db="EMBL/GenBank/DDBJ databases">
        <title>Long branches in the seed plants and the root of the angiosperms.</title>
        <authorList>
            <person name="Graham S.W."/>
            <person name="Reeves P.A."/>
            <person name="Burns A."/>
            <person name="Olmstead R.G."/>
        </authorList>
    </citation>
    <scope>NUCLEOTIDE SEQUENCE [GENOMIC DNA]</scope>
</reference>
<reference key="2">
    <citation type="journal article" date="2008" name="BMC Evol. Biol.">
        <title>The complete plastid genome sequence of Welwitschia mirabilis: an unusually compact plastome with accelerated divergence rates.</title>
        <authorList>
            <person name="McCoy S.R."/>
            <person name="Kuehl J.V."/>
            <person name="Boore J.L."/>
            <person name="Raubeson L.A."/>
        </authorList>
    </citation>
    <scope>NUCLEOTIDE SEQUENCE [LARGE SCALE GENOMIC DNA]</scope>
</reference>
<reference key="3">
    <citation type="journal article" date="2009" name="Mol. Phylogenet. Evol.">
        <title>Evolution of reduced and compact chloroplast genomes (cpDNAs) in gnetophytes: Selection toward a lower-cost strategy.</title>
        <authorList>
            <person name="Wu C.-S."/>
            <person name="Lai Y.-T."/>
            <person name="Lin C.-P."/>
            <person name="Wang Y.-N."/>
            <person name="Chaw S.-M."/>
        </authorList>
    </citation>
    <scope>NUCLEOTIDE SEQUENCE [LARGE SCALE GENOMIC DNA]</scope>
</reference>
<protein>
    <recommendedName>
        <fullName evidence="1">Protein PsbN</fullName>
    </recommendedName>
</protein>
<name>PSBN_WELMI</name>
<feature type="chain" id="PRO_0000207969" description="Protein PsbN">
    <location>
        <begin position="1"/>
        <end position="43"/>
    </location>
</feature>
<feature type="transmembrane region" description="Helical" evidence="1">
    <location>
        <begin position="5"/>
        <end position="27"/>
    </location>
</feature>
<accession>Q8HS08</accession>
<accession>B2Y1Y7</accession>
<accession>B7ZI21</accession>